<keyword id="KW-0903">Direct protein sequencing</keyword>
<keyword id="KW-0406">Ion transport</keyword>
<keyword id="KW-0472">Membrane</keyword>
<keyword id="KW-0630">Potassium</keyword>
<keyword id="KW-0633">Potassium transport</keyword>
<keyword id="KW-1185">Reference proteome</keyword>
<keyword id="KW-0915">Sodium</keyword>
<keyword id="KW-0739">Sodium transport</keyword>
<keyword id="KW-0740">Sodium/potassium transport</keyword>
<keyword id="KW-0812">Transmembrane</keyword>
<keyword id="KW-1133">Transmembrane helix</keyword>
<keyword id="KW-0813">Transport</keyword>
<reference key="1">
    <citation type="journal article" date="1993" name="J. Cell Biol.">
        <title>Molecular cloning and immunological characterization of the gamma polypeptide, a small protein associated with the Na,K-ATPase.</title>
        <authorList>
            <person name="Mercer R.W."/>
            <person name="Biemesderfer D."/>
            <person name="Bliss D.P. Jr."/>
            <person name="Collins J.H."/>
            <person name="Forbush B. III"/>
        </authorList>
    </citation>
    <scope>NUCLEOTIDE SEQUENCE [MRNA] OF 6-53</scope>
    <source>
        <tissue>Kidney</tissue>
    </source>
</reference>
<reference key="2">
    <citation type="journal article" date="1987" name="Biochemistry">
        <title>The 'gamma subunit' of Na,K-ATPase: a small, amphiphilic protein with a unique amino acid sequence.</title>
        <authorList>
            <person name="Collins J.H."/>
            <person name="Leszyk J."/>
        </authorList>
    </citation>
    <scope>PROTEIN SEQUENCE OF 1-33</scope>
    <source>
        <tissue>Kidney</tissue>
    </source>
</reference>
<organism>
    <name type="scientific">Ovis aries</name>
    <name type="common">Sheep</name>
    <dbReference type="NCBI Taxonomy" id="9940"/>
    <lineage>
        <taxon>Eukaryota</taxon>
        <taxon>Metazoa</taxon>
        <taxon>Chordata</taxon>
        <taxon>Craniata</taxon>
        <taxon>Vertebrata</taxon>
        <taxon>Euteleostomi</taxon>
        <taxon>Mammalia</taxon>
        <taxon>Eutheria</taxon>
        <taxon>Laurasiatheria</taxon>
        <taxon>Artiodactyla</taxon>
        <taxon>Ruminantia</taxon>
        <taxon>Pecora</taxon>
        <taxon>Bovidae</taxon>
        <taxon>Caprinae</taxon>
        <taxon>Ovis</taxon>
    </lineage>
</organism>
<name>ATNG_SHEEP</name>
<protein>
    <recommendedName>
        <fullName>Sodium/potassium-transporting ATPase subunit gamma</fullName>
        <shortName>Na(+)/K(+) ATPase subunit gamma</shortName>
    </recommendedName>
    <alternativeName>
        <fullName>FXYD domain-containing ion transport regulator 2</fullName>
    </alternativeName>
    <alternativeName>
        <fullName>Sodium pump gamma chain</fullName>
    </alternativeName>
</protein>
<sequence length="53" mass="6073">ENEDPFYYDYETVRNGGLIFAALAFIVGLVIILSKRFRCGAKKKHRQIPEDGL</sequence>
<accession>Q04680</accession>
<proteinExistence type="evidence at protein level"/>
<feature type="chain" id="PRO_0000148188" description="Sodium/potassium-transporting ATPase subunit gamma">
    <location>
        <begin position="1" status="less than"/>
        <end position="53"/>
    </location>
</feature>
<feature type="transmembrane region" description="Helical" evidence="2">
    <location>
        <begin position="16"/>
        <end position="34"/>
    </location>
</feature>
<feature type="non-terminal residue">
    <location>
        <position position="1"/>
    </location>
</feature>
<gene>
    <name type="primary">FXYD2</name>
    <name type="synonym">ATP1C</name>
    <name type="synonym">ATP1G1</name>
</gene>
<dbReference type="EMBL" id="X70061">
    <property type="protein sequence ID" value="CAA49665.1"/>
    <property type="molecule type" value="mRNA"/>
</dbReference>
<dbReference type="PIR" id="A46435">
    <property type="entry name" value="A46435"/>
</dbReference>
<dbReference type="SMR" id="Q04680"/>
<dbReference type="STRING" id="9940.ENSOARP00000007530"/>
<dbReference type="PaxDb" id="9940-ENSOARP00000007530"/>
<dbReference type="eggNOG" id="ENOG502SGMI">
    <property type="taxonomic scope" value="Eukaryota"/>
</dbReference>
<dbReference type="Proteomes" id="UP000002356">
    <property type="component" value="Unplaced"/>
</dbReference>
<dbReference type="GO" id="GO:0016020">
    <property type="term" value="C:membrane"/>
    <property type="evidence" value="ECO:0007669"/>
    <property type="project" value="UniProtKB-SubCell"/>
</dbReference>
<dbReference type="GO" id="GO:0017080">
    <property type="term" value="F:sodium channel regulator activity"/>
    <property type="evidence" value="ECO:0007669"/>
    <property type="project" value="TreeGrafter"/>
</dbReference>
<dbReference type="GO" id="GO:0006813">
    <property type="term" value="P:potassium ion transport"/>
    <property type="evidence" value="ECO:0007669"/>
    <property type="project" value="UniProtKB-KW"/>
</dbReference>
<dbReference type="GO" id="GO:0043269">
    <property type="term" value="P:regulation of monoatomic ion transport"/>
    <property type="evidence" value="ECO:0007669"/>
    <property type="project" value="InterPro"/>
</dbReference>
<dbReference type="GO" id="GO:0006814">
    <property type="term" value="P:sodium ion transport"/>
    <property type="evidence" value="ECO:0007669"/>
    <property type="project" value="UniProtKB-KW"/>
</dbReference>
<dbReference type="CDD" id="cd20318">
    <property type="entry name" value="FXYD2"/>
    <property type="match status" value="1"/>
</dbReference>
<dbReference type="FunFam" id="1.20.5.780:FF:000004">
    <property type="entry name" value="FXYD domain-containing ion transport regulator"/>
    <property type="match status" value="1"/>
</dbReference>
<dbReference type="Gene3D" id="1.20.5.780">
    <property type="entry name" value="Single helix bin"/>
    <property type="match status" value="1"/>
</dbReference>
<dbReference type="InterPro" id="IPR047282">
    <property type="entry name" value="ATNG"/>
</dbReference>
<dbReference type="InterPro" id="IPR047297">
    <property type="entry name" value="FXYD_motif"/>
</dbReference>
<dbReference type="InterPro" id="IPR000272">
    <property type="entry name" value="Ion-transport_regulator_FXYD"/>
</dbReference>
<dbReference type="PANTHER" id="PTHR14132">
    <property type="entry name" value="SODIUM/POTASSIUM-TRANSPORTING ATPASE SUBUNIT GAMMA"/>
    <property type="match status" value="1"/>
</dbReference>
<dbReference type="PANTHER" id="PTHR14132:SF3">
    <property type="entry name" value="SODIUM_POTASSIUM-TRANSPORTING ATPASE SUBUNIT GAMMA"/>
    <property type="match status" value="1"/>
</dbReference>
<dbReference type="Pfam" id="PF02038">
    <property type="entry name" value="ATP1G1_PLM_MAT8"/>
    <property type="match status" value="1"/>
</dbReference>
<dbReference type="PROSITE" id="PS01310">
    <property type="entry name" value="FXYD"/>
    <property type="match status" value="1"/>
</dbReference>
<evidence type="ECO:0000250" key="1">
    <source>
        <dbReference type="UniProtKB" id="O13001"/>
    </source>
</evidence>
<evidence type="ECO:0000255" key="2"/>
<evidence type="ECO:0000305" key="3"/>
<comment type="function">
    <text>May be involved in forming the receptor site for cardiac glycoside binding or may modulate the transport function of the sodium ATPase.</text>
</comment>
<comment type="subunit">
    <text evidence="1">Regulatory subunit of the sodium/potassium-transporting ATPase which is composed of a catalytic alpha subunit, an auxiliary non-catalytic beta subunit and an additional regulatory subunit.</text>
</comment>
<comment type="subcellular location">
    <subcellularLocation>
        <location evidence="3">Membrane</location>
        <topology evidence="3">Single-pass type III membrane protein</topology>
    </subcellularLocation>
</comment>
<comment type="tissue specificity">
    <text>Highest levels expressed in the kidney and spleen. Restricted to the basolateral membrane in renal epithelial cells and varies in its level of expression along the nephron.</text>
</comment>
<comment type="PTM">
    <text>The N-terminus is blocked.</text>
</comment>
<comment type="similarity">
    <text evidence="3">Belongs to the FXYD family.</text>
</comment>